<name>PELO_RAT</name>
<sequence length="385" mass="43407">MKLVRKDIEKDNAGQVTLVPEEPEDMWHTYNLVQVGDSLRASTIRKVQTESSTGSVGSNRVRTTLTLCVEAIDFDSQACQLRVKGTNIQENEYVKMGAYHTIELEPNRQFTLAKKQWDSVVLERIEQACDPAWSADVAAVVMQEGLAHVCLVTPSMTLTRAKVEVNIPRKRKGNCSQHDRALERFYEQVVQAIQRHINFEVVKCILVASPGFVREQFCDYMFQQAVKTDNKVLLENRSKFLQVHASSGHKYSLKEVLCDPTVASRLSDTKAAGEVKALDDFYKMLQHEPDRAFYGLKQVERANEALAIDTLLISDELFRHQDVATRSRYVRLVDSVKENAGTVRIFSSLHVSGEQLGQLTGVAAILRFPVPELSDQEDDSSSEED</sequence>
<feature type="chain" id="PRO_0000232836" description="Protein pelota homolog">
    <location>
        <begin position="1"/>
        <end position="385"/>
    </location>
</feature>
<feature type="modified residue" description="Phosphoserine" evidence="4">
    <location>
        <position position="374"/>
    </location>
</feature>
<feature type="modified residue" description="Phosphoserine" evidence="4">
    <location>
        <position position="380"/>
    </location>
</feature>
<feature type="modified residue" description="Phosphoserine" evidence="4">
    <location>
        <position position="381"/>
    </location>
</feature>
<feature type="modified residue" description="Phosphoserine" evidence="4">
    <location>
        <position position="382"/>
    </location>
</feature>
<feature type="cross-link" description="Glycyl lysine isopeptide (Lys-Gly) (interchain with G-Cter in SUMO2)" evidence="2">
    <location>
        <position position="162"/>
    </location>
</feature>
<reference key="1">
    <citation type="journal article" date="2004" name="Genome Res.">
        <title>The status, quality, and expansion of the NIH full-length cDNA project: the Mammalian Gene Collection (MGC).</title>
        <authorList>
            <consortium name="The MGC Project Team"/>
        </authorList>
    </citation>
    <scope>NUCLEOTIDE SEQUENCE [LARGE SCALE MRNA]</scope>
    <source>
        <tissue>Testis</tissue>
    </source>
</reference>
<reference key="2">
    <citation type="journal article" date="2012" name="Nat. Commun.">
        <title>Quantitative maps of protein phosphorylation sites across 14 different rat organs and tissues.</title>
        <authorList>
            <person name="Lundby A."/>
            <person name="Secher A."/>
            <person name="Lage K."/>
            <person name="Nordsborg N.B."/>
            <person name="Dmytriyev A."/>
            <person name="Lundby C."/>
            <person name="Olsen J.V."/>
        </authorList>
    </citation>
    <scope>PHOSPHORYLATION [LARGE SCALE ANALYSIS] AT SER-374; SER-380; SER-381 AND SER-382</scope>
    <scope>IDENTIFICATION BY MASS SPECTROMETRY [LARGE SCALE ANALYSIS]</scope>
</reference>
<comment type="function">
    <text evidence="2">Component of the Pelota-HBS1L complex, a complex that recognizes stalled ribosomes and triggers the No-Go Decay (NGD) pathway. In the Pelota-HBS1L complex, PELO recognizes ribosomes stalled at the 3' end of an mRNA and engages stalled ribosomes by destabilizing mRNA in the mRNA channel. Following mRNA extraction from stalled ribosomes by the SKI complex, the Pelota-HBS1L complex promotes recruitment of ABCE1, which drives the disassembly of stalled ribosomes, followed by degradation of damaged mRNAs as part of the NGD pathway. As part of the PINK1-regulated signaling, upon mitochondrial damage is recruited to the ribosome/mRNA-ribonucleoprotein complex associated to mitochondrial outer membrane thereby enabling the recruitment of autophagy receptors and induction of mitophagy.</text>
</comment>
<comment type="cofactor">
    <cofactor evidence="1">
        <name>a divalent metal cation</name>
        <dbReference type="ChEBI" id="CHEBI:60240"/>
    </cofactor>
</comment>
<comment type="subunit">
    <text evidence="2">Component of the Pelota-HBS1L complex, also named Dom34-Hbs1 complex, composed of PELO and HBS1L. Interacts with PINK1. Interacts with ABCE1. Interacts with CNOT4.</text>
</comment>
<comment type="subcellular location">
    <subcellularLocation>
        <location evidence="2">Cytoplasm</location>
    </subcellularLocation>
</comment>
<comment type="similarity">
    <text evidence="3">Belongs to the eukaryotic release factor 1 family. Pelota subfamily.</text>
</comment>
<accession>Q5XIP1</accession>
<proteinExistence type="evidence at protein level"/>
<keyword id="KW-0131">Cell cycle</keyword>
<keyword id="KW-0132">Cell division</keyword>
<keyword id="KW-0963">Cytoplasm</keyword>
<keyword id="KW-1017">Isopeptide bond</keyword>
<keyword id="KW-0479">Metal-binding</keyword>
<keyword id="KW-0597">Phosphoprotein</keyword>
<keyword id="KW-1185">Reference proteome</keyword>
<keyword id="KW-0810">Translation regulation</keyword>
<keyword id="KW-0832">Ubl conjugation</keyword>
<protein>
    <recommendedName>
        <fullName>Protein pelota homolog</fullName>
    </recommendedName>
</protein>
<organism>
    <name type="scientific">Rattus norvegicus</name>
    <name type="common">Rat</name>
    <dbReference type="NCBI Taxonomy" id="10116"/>
    <lineage>
        <taxon>Eukaryota</taxon>
        <taxon>Metazoa</taxon>
        <taxon>Chordata</taxon>
        <taxon>Craniata</taxon>
        <taxon>Vertebrata</taxon>
        <taxon>Euteleostomi</taxon>
        <taxon>Mammalia</taxon>
        <taxon>Eutheria</taxon>
        <taxon>Euarchontoglires</taxon>
        <taxon>Glires</taxon>
        <taxon>Rodentia</taxon>
        <taxon>Myomorpha</taxon>
        <taxon>Muroidea</taxon>
        <taxon>Muridae</taxon>
        <taxon>Murinae</taxon>
        <taxon>Rattus</taxon>
    </lineage>
</organism>
<evidence type="ECO:0000250" key="1">
    <source>
        <dbReference type="UniProtKB" id="P33309"/>
    </source>
</evidence>
<evidence type="ECO:0000250" key="2">
    <source>
        <dbReference type="UniProtKB" id="Q9BRX2"/>
    </source>
</evidence>
<evidence type="ECO:0000305" key="3"/>
<evidence type="ECO:0007744" key="4">
    <source>
    </source>
</evidence>
<dbReference type="EMBL" id="BC083637">
    <property type="protein sequence ID" value="AAH83637.1"/>
    <property type="molecule type" value="mRNA"/>
</dbReference>
<dbReference type="RefSeq" id="NP_001007635.1">
    <property type="nucleotide sequence ID" value="NM_001007634.1"/>
</dbReference>
<dbReference type="SMR" id="Q5XIP1"/>
<dbReference type="FunCoup" id="Q5XIP1">
    <property type="interactions" value="2068"/>
</dbReference>
<dbReference type="IntAct" id="Q5XIP1">
    <property type="interactions" value="6"/>
</dbReference>
<dbReference type="STRING" id="10116.ENSRNOP00000075562"/>
<dbReference type="iPTMnet" id="Q5XIP1"/>
<dbReference type="PhosphoSitePlus" id="Q5XIP1"/>
<dbReference type="jPOST" id="Q5XIP1"/>
<dbReference type="PaxDb" id="10116-ENSRNOP00000038406"/>
<dbReference type="Ensembl" id="ENSRNOT00000091499.2">
    <property type="protein sequence ID" value="ENSRNOP00000075562.1"/>
    <property type="gene ID" value="ENSRNOG00000061128.2"/>
</dbReference>
<dbReference type="GeneID" id="294754"/>
<dbReference type="KEGG" id="rno:294754"/>
<dbReference type="AGR" id="RGD:1359591"/>
<dbReference type="CTD" id="53918"/>
<dbReference type="RGD" id="1359591">
    <property type="gene designation" value="Pelo"/>
</dbReference>
<dbReference type="eggNOG" id="KOG2869">
    <property type="taxonomic scope" value="Eukaryota"/>
</dbReference>
<dbReference type="GeneTree" id="ENSGT00390000016326"/>
<dbReference type="HOGENOM" id="CLU_023334_3_1_1"/>
<dbReference type="InParanoid" id="Q5XIP1"/>
<dbReference type="OMA" id="DDLWHLK"/>
<dbReference type="OrthoDB" id="10249111at2759"/>
<dbReference type="PhylomeDB" id="Q5XIP1"/>
<dbReference type="TreeFam" id="TF105733"/>
<dbReference type="PRO" id="PR:Q5XIP1"/>
<dbReference type="Proteomes" id="UP000002494">
    <property type="component" value="Chromosome 2"/>
</dbReference>
<dbReference type="Bgee" id="ENSRNOG00000061128">
    <property type="expression patterns" value="Expressed in testis and 20 other cell types or tissues"/>
</dbReference>
<dbReference type="GO" id="GO:0005737">
    <property type="term" value="C:cytoplasm"/>
    <property type="evidence" value="ECO:0000318"/>
    <property type="project" value="GO_Central"/>
</dbReference>
<dbReference type="GO" id="GO:0022626">
    <property type="term" value="C:cytosolic ribosome"/>
    <property type="evidence" value="ECO:0000266"/>
    <property type="project" value="RGD"/>
</dbReference>
<dbReference type="GO" id="GO:1990533">
    <property type="term" value="C:Dom34-Hbs1 complex"/>
    <property type="evidence" value="ECO:0000250"/>
    <property type="project" value="UniProtKB"/>
</dbReference>
<dbReference type="GO" id="GO:0046872">
    <property type="term" value="F:metal ion binding"/>
    <property type="evidence" value="ECO:0007669"/>
    <property type="project" value="UniProtKB-KW"/>
</dbReference>
<dbReference type="GO" id="GO:0060589">
    <property type="term" value="F:nucleoside-triphosphatase regulator activity"/>
    <property type="evidence" value="ECO:0000266"/>
    <property type="project" value="RGD"/>
</dbReference>
<dbReference type="GO" id="GO:0043022">
    <property type="term" value="F:ribosome binding"/>
    <property type="evidence" value="ECO:0000250"/>
    <property type="project" value="UniProtKB"/>
</dbReference>
<dbReference type="GO" id="GO:0170011">
    <property type="term" value="F:stalled ribosome sensor activity"/>
    <property type="evidence" value="ECO:0000266"/>
    <property type="project" value="RGD"/>
</dbReference>
<dbReference type="GO" id="GO:0051301">
    <property type="term" value="P:cell division"/>
    <property type="evidence" value="ECO:0007669"/>
    <property type="project" value="UniProtKB-KW"/>
</dbReference>
<dbReference type="GO" id="GO:0051276">
    <property type="term" value="P:chromosome organization"/>
    <property type="evidence" value="ECO:0000266"/>
    <property type="project" value="RGD"/>
</dbReference>
<dbReference type="GO" id="GO:0007492">
    <property type="term" value="P:endoderm development"/>
    <property type="evidence" value="ECO:0000266"/>
    <property type="project" value="RGD"/>
</dbReference>
<dbReference type="GO" id="GO:0001833">
    <property type="term" value="P:inner cell mass cell proliferation"/>
    <property type="evidence" value="ECO:0000266"/>
    <property type="project" value="RGD"/>
</dbReference>
<dbReference type="GO" id="GO:0060231">
    <property type="term" value="P:mesenchymal to epithelial transition"/>
    <property type="evidence" value="ECO:0000266"/>
    <property type="project" value="RGD"/>
</dbReference>
<dbReference type="GO" id="GO:0070651">
    <property type="term" value="P:nonfunctional rRNA decay"/>
    <property type="evidence" value="ECO:0000318"/>
    <property type="project" value="GO_Central"/>
</dbReference>
<dbReference type="GO" id="GO:0070966">
    <property type="term" value="P:nuclear-transcribed mRNA catabolic process, no-go decay"/>
    <property type="evidence" value="ECO:0000250"/>
    <property type="project" value="UniProtKB"/>
</dbReference>
<dbReference type="GO" id="GO:0070481">
    <property type="term" value="P:nuclear-transcribed mRNA catabolic process, non-stop decay"/>
    <property type="evidence" value="ECO:0007669"/>
    <property type="project" value="InterPro"/>
</dbReference>
<dbReference type="GO" id="GO:0030513">
    <property type="term" value="P:positive regulation of BMP signaling pathway"/>
    <property type="evidence" value="ECO:0000266"/>
    <property type="project" value="RGD"/>
</dbReference>
<dbReference type="GO" id="GO:0006417">
    <property type="term" value="P:regulation of translation"/>
    <property type="evidence" value="ECO:0007669"/>
    <property type="project" value="UniProtKB-KW"/>
</dbReference>
<dbReference type="GO" id="GO:0072344">
    <property type="term" value="P:rescue of stalled ribosome"/>
    <property type="evidence" value="ECO:0000250"/>
    <property type="project" value="UniProtKB"/>
</dbReference>
<dbReference type="GO" id="GO:0032790">
    <property type="term" value="P:ribosome disassembly"/>
    <property type="evidence" value="ECO:0000250"/>
    <property type="project" value="UniProtKB"/>
</dbReference>
<dbReference type="GO" id="GO:0071025">
    <property type="term" value="P:RNA surveillance"/>
    <property type="evidence" value="ECO:0007669"/>
    <property type="project" value="InterPro"/>
</dbReference>
<dbReference type="GO" id="GO:0019827">
    <property type="term" value="P:stem cell population maintenance"/>
    <property type="evidence" value="ECO:0000266"/>
    <property type="project" value="RGD"/>
</dbReference>
<dbReference type="FunFam" id="2.30.30.870:FF:000001">
    <property type="entry name" value="Protein pelota homolog"/>
    <property type="match status" value="1"/>
</dbReference>
<dbReference type="FunFam" id="3.30.1330.30:FF:000008">
    <property type="entry name" value="Protein pelota homolog"/>
    <property type="match status" value="1"/>
</dbReference>
<dbReference type="FunFam" id="3.30.420.60:FF:000002">
    <property type="entry name" value="Protein pelota homolog"/>
    <property type="match status" value="1"/>
</dbReference>
<dbReference type="Gene3D" id="3.30.1330.30">
    <property type="match status" value="1"/>
</dbReference>
<dbReference type="Gene3D" id="3.30.420.60">
    <property type="entry name" value="eRF1 domain 2"/>
    <property type="match status" value="1"/>
</dbReference>
<dbReference type="Gene3D" id="2.30.30.870">
    <property type="entry name" value="Pelota, domain A"/>
    <property type="match status" value="1"/>
</dbReference>
<dbReference type="InterPro" id="IPR042226">
    <property type="entry name" value="eFR1_2_sf"/>
</dbReference>
<dbReference type="InterPro" id="IPR005140">
    <property type="entry name" value="eRF1_1_Pelota"/>
</dbReference>
<dbReference type="InterPro" id="IPR005141">
    <property type="entry name" value="eRF1_2"/>
</dbReference>
<dbReference type="InterPro" id="IPR005142">
    <property type="entry name" value="eRF1_3"/>
</dbReference>
<dbReference type="InterPro" id="IPR038069">
    <property type="entry name" value="Pelota/DOM34_N"/>
</dbReference>
<dbReference type="InterPro" id="IPR029064">
    <property type="entry name" value="Ribosomal_eL30-like_sf"/>
</dbReference>
<dbReference type="InterPro" id="IPR004405">
    <property type="entry name" value="Transl-rel_pelota"/>
</dbReference>
<dbReference type="NCBIfam" id="TIGR00111">
    <property type="entry name" value="pelota"/>
    <property type="match status" value="1"/>
</dbReference>
<dbReference type="PANTHER" id="PTHR10853">
    <property type="entry name" value="PELOTA"/>
    <property type="match status" value="1"/>
</dbReference>
<dbReference type="PANTHER" id="PTHR10853:SF0">
    <property type="entry name" value="PROTEIN PELOTA HOMOLOG"/>
    <property type="match status" value="1"/>
</dbReference>
<dbReference type="Pfam" id="PF03463">
    <property type="entry name" value="eRF1_1"/>
    <property type="match status" value="1"/>
</dbReference>
<dbReference type="Pfam" id="PF03464">
    <property type="entry name" value="eRF1_2"/>
    <property type="match status" value="1"/>
</dbReference>
<dbReference type="Pfam" id="PF03465">
    <property type="entry name" value="eRF1_3"/>
    <property type="match status" value="1"/>
</dbReference>
<dbReference type="SMART" id="SM01194">
    <property type="entry name" value="eRF1_1"/>
    <property type="match status" value="1"/>
</dbReference>
<dbReference type="SUPFAM" id="SSF159065">
    <property type="entry name" value="Dom34/Pelota N-terminal domain-like"/>
    <property type="match status" value="1"/>
</dbReference>
<dbReference type="SUPFAM" id="SSF55315">
    <property type="entry name" value="L30e-like"/>
    <property type="match status" value="1"/>
</dbReference>
<dbReference type="SUPFAM" id="SSF53137">
    <property type="entry name" value="Translational machinery components"/>
    <property type="match status" value="1"/>
</dbReference>
<gene>
    <name type="primary">Pelo</name>
</gene>